<name>PYRG_ALCBS</name>
<gene>
    <name evidence="1" type="primary">pyrG</name>
    <name type="ordered locus">ABO_1162</name>
</gene>
<evidence type="ECO:0000255" key="1">
    <source>
        <dbReference type="HAMAP-Rule" id="MF_01227"/>
    </source>
</evidence>
<reference key="1">
    <citation type="journal article" date="2006" name="Nat. Biotechnol.">
        <title>Genome sequence of the ubiquitous hydrocarbon-degrading marine bacterium Alcanivorax borkumensis.</title>
        <authorList>
            <person name="Schneiker S."/>
            <person name="Martins dos Santos V.A.P."/>
            <person name="Bartels D."/>
            <person name="Bekel T."/>
            <person name="Brecht M."/>
            <person name="Buhrmester J."/>
            <person name="Chernikova T.N."/>
            <person name="Denaro R."/>
            <person name="Ferrer M."/>
            <person name="Gertler C."/>
            <person name="Goesmann A."/>
            <person name="Golyshina O.V."/>
            <person name="Kaminski F."/>
            <person name="Khachane A.N."/>
            <person name="Lang S."/>
            <person name="Linke B."/>
            <person name="McHardy A.C."/>
            <person name="Meyer F."/>
            <person name="Nechitaylo T."/>
            <person name="Puehler A."/>
            <person name="Regenhardt D."/>
            <person name="Rupp O."/>
            <person name="Sabirova J.S."/>
            <person name="Selbitschka W."/>
            <person name="Yakimov M.M."/>
            <person name="Timmis K.N."/>
            <person name="Vorhoelter F.-J."/>
            <person name="Weidner S."/>
            <person name="Kaiser O."/>
            <person name="Golyshin P.N."/>
        </authorList>
    </citation>
    <scope>NUCLEOTIDE SEQUENCE [LARGE SCALE GENOMIC DNA]</scope>
    <source>
        <strain>ATCC 700651 / DSM 11573 / NCIMB 13689 / SK2</strain>
    </source>
</reference>
<sequence length="545" mass="59687">MSRFIFVTGGVVSSLGKGITSASLATLLEARGLNVTLIKMDPYINVDPGTMSPYQHGEVFVTEDGAETDLDLGHYERFIRTRLNRRNSFTTGRVYQHVLDKERRGEYLGATVQVIPHITDEIKLKIREGAGDADVAIVEIGGTAGDIESLPFLEAARQMRVELGSSQSLLVHLTLVPYIATAGEIKTKPTQHSVKELRSIGLQPDILVCRADDPIPQSAREKIALFTNVEARAVISSPDCKTIYQVPRGMHEQGLDAIVVEKFGLDLPEPDLGEWDRVVEAQLNPEHEVTVGMVGKYIELVDAYKSLNEALIHAGISNRAKVNILYLDAEDIERDGTGVLESLDAILVPGGFGDRGTEGKIAAIRYARENKVPYLGICLGMQLAVIEYARHVAGIEKAHSSELNPNTPDPVVGLITEWITEDGQKELRSADSDLGGTMRLGGQECVLEADSRAAECYGSTHIVERHRHRYEVNNNYLPQLEAAGLKIVGRSADGELVEVIEVGDHPWFVACQFHPEFTSTPRDGHGLFKGYVAAALAEQKAHKET</sequence>
<comment type="function">
    <text evidence="1">Catalyzes the ATP-dependent amination of UTP to CTP with either L-glutamine or ammonia as the source of nitrogen. Regulates intracellular CTP levels through interactions with the four ribonucleotide triphosphates.</text>
</comment>
<comment type="catalytic activity">
    <reaction evidence="1">
        <text>UTP + L-glutamine + ATP + H2O = CTP + L-glutamate + ADP + phosphate + 2 H(+)</text>
        <dbReference type="Rhea" id="RHEA:26426"/>
        <dbReference type="ChEBI" id="CHEBI:15377"/>
        <dbReference type="ChEBI" id="CHEBI:15378"/>
        <dbReference type="ChEBI" id="CHEBI:29985"/>
        <dbReference type="ChEBI" id="CHEBI:30616"/>
        <dbReference type="ChEBI" id="CHEBI:37563"/>
        <dbReference type="ChEBI" id="CHEBI:43474"/>
        <dbReference type="ChEBI" id="CHEBI:46398"/>
        <dbReference type="ChEBI" id="CHEBI:58359"/>
        <dbReference type="ChEBI" id="CHEBI:456216"/>
        <dbReference type="EC" id="6.3.4.2"/>
    </reaction>
</comment>
<comment type="catalytic activity">
    <reaction evidence="1">
        <text>L-glutamine + H2O = L-glutamate + NH4(+)</text>
        <dbReference type="Rhea" id="RHEA:15889"/>
        <dbReference type="ChEBI" id="CHEBI:15377"/>
        <dbReference type="ChEBI" id="CHEBI:28938"/>
        <dbReference type="ChEBI" id="CHEBI:29985"/>
        <dbReference type="ChEBI" id="CHEBI:58359"/>
    </reaction>
</comment>
<comment type="catalytic activity">
    <reaction evidence="1">
        <text>UTP + NH4(+) + ATP = CTP + ADP + phosphate + 2 H(+)</text>
        <dbReference type="Rhea" id="RHEA:16597"/>
        <dbReference type="ChEBI" id="CHEBI:15378"/>
        <dbReference type="ChEBI" id="CHEBI:28938"/>
        <dbReference type="ChEBI" id="CHEBI:30616"/>
        <dbReference type="ChEBI" id="CHEBI:37563"/>
        <dbReference type="ChEBI" id="CHEBI:43474"/>
        <dbReference type="ChEBI" id="CHEBI:46398"/>
        <dbReference type="ChEBI" id="CHEBI:456216"/>
    </reaction>
</comment>
<comment type="activity regulation">
    <text evidence="1">Allosterically activated by GTP, when glutamine is the substrate; GTP has no effect on the reaction when ammonia is the substrate. The allosteric effector GTP functions by stabilizing the protein conformation that binds the tetrahedral intermediate(s) formed during glutamine hydrolysis. Inhibited by the product CTP, via allosteric rather than competitive inhibition.</text>
</comment>
<comment type="pathway">
    <text evidence="1">Pyrimidine metabolism; CTP biosynthesis via de novo pathway; CTP from UDP: step 2/2.</text>
</comment>
<comment type="subunit">
    <text evidence="1">Homotetramer.</text>
</comment>
<comment type="miscellaneous">
    <text evidence="1">CTPSs have evolved a hybrid strategy for distinguishing between UTP and CTP. The overlapping regions of the product feedback inhibitory and substrate sites recognize a common feature in both compounds, the triphosphate moiety. To differentiate isosteric substrate and product pyrimidine rings, an additional pocket far from the expected kinase/ligase catalytic site, specifically recognizes the cytosine and ribose portions of the product inhibitor.</text>
</comment>
<comment type="similarity">
    <text evidence="1">Belongs to the CTP synthase family.</text>
</comment>
<dbReference type="EC" id="6.3.4.2" evidence="1"/>
<dbReference type="EMBL" id="AM286690">
    <property type="protein sequence ID" value="CAL16610.1"/>
    <property type="molecule type" value="Genomic_DNA"/>
</dbReference>
<dbReference type="RefSeq" id="WP_011588445.1">
    <property type="nucleotide sequence ID" value="NC_008260.1"/>
</dbReference>
<dbReference type="SMR" id="Q0VQD8"/>
<dbReference type="STRING" id="393595.ABO_1162"/>
<dbReference type="KEGG" id="abo:ABO_1162"/>
<dbReference type="eggNOG" id="COG0504">
    <property type="taxonomic scope" value="Bacteria"/>
</dbReference>
<dbReference type="HOGENOM" id="CLU_011675_5_0_6"/>
<dbReference type="OrthoDB" id="9801107at2"/>
<dbReference type="UniPathway" id="UPA00159">
    <property type="reaction ID" value="UER00277"/>
</dbReference>
<dbReference type="Proteomes" id="UP000008871">
    <property type="component" value="Chromosome"/>
</dbReference>
<dbReference type="GO" id="GO:0005829">
    <property type="term" value="C:cytosol"/>
    <property type="evidence" value="ECO:0007669"/>
    <property type="project" value="TreeGrafter"/>
</dbReference>
<dbReference type="GO" id="GO:0005524">
    <property type="term" value="F:ATP binding"/>
    <property type="evidence" value="ECO:0007669"/>
    <property type="project" value="UniProtKB-KW"/>
</dbReference>
<dbReference type="GO" id="GO:0003883">
    <property type="term" value="F:CTP synthase activity"/>
    <property type="evidence" value="ECO:0007669"/>
    <property type="project" value="UniProtKB-UniRule"/>
</dbReference>
<dbReference type="GO" id="GO:0004359">
    <property type="term" value="F:glutaminase activity"/>
    <property type="evidence" value="ECO:0007669"/>
    <property type="project" value="RHEA"/>
</dbReference>
<dbReference type="GO" id="GO:0042802">
    <property type="term" value="F:identical protein binding"/>
    <property type="evidence" value="ECO:0007669"/>
    <property type="project" value="TreeGrafter"/>
</dbReference>
<dbReference type="GO" id="GO:0046872">
    <property type="term" value="F:metal ion binding"/>
    <property type="evidence" value="ECO:0007669"/>
    <property type="project" value="UniProtKB-KW"/>
</dbReference>
<dbReference type="GO" id="GO:0044210">
    <property type="term" value="P:'de novo' CTP biosynthetic process"/>
    <property type="evidence" value="ECO:0007669"/>
    <property type="project" value="UniProtKB-UniRule"/>
</dbReference>
<dbReference type="GO" id="GO:0019856">
    <property type="term" value="P:pyrimidine nucleobase biosynthetic process"/>
    <property type="evidence" value="ECO:0007669"/>
    <property type="project" value="TreeGrafter"/>
</dbReference>
<dbReference type="CDD" id="cd03113">
    <property type="entry name" value="CTPS_N"/>
    <property type="match status" value="1"/>
</dbReference>
<dbReference type="CDD" id="cd01746">
    <property type="entry name" value="GATase1_CTP_Synthase"/>
    <property type="match status" value="1"/>
</dbReference>
<dbReference type="FunFam" id="3.40.50.300:FF:000009">
    <property type="entry name" value="CTP synthase"/>
    <property type="match status" value="1"/>
</dbReference>
<dbReference type="FunFam" id="3.40.50.880:FF:000002">
    <property type="entry name" value="CTP synthase"/>
    <property type="match status" value="1"/>
</dbReference>
<dbReference type="Gene3D" id="3.40.50.880">
    <property type="match status" value="1"/>
</dbReference>
<dbReference type="Gene3D" id="3.40.50.300">
    <property type="entry name" value="P-loop containing nucleotide triphosphate hydrolases"/>
    <property type="match status" value="1"/>
</dbReference>
<dbReference type="HAMAP" id="MF_01227">
    <property type="entry name" value="PyrG"/>
    <property type="match status" value="1"/>
</dbReference>
<dbReference type="InterPro" id="IPR029062">
    <property type="entry name" value="Class_I_gatase-like"/>
</dbReference>
<dbReference type="InterPro" id="IPR004468">
    <property type="entry name" value="CTP_synthase"/>
</dbReference>
<dbReference type="InterPro" id="IPR017456">
    <property type="entry name" value="CTP_synthase_N"/>
</dbReference>
<dbReference type="InterPro" id="IPR017926">
    <property type="entry name" value="GATASE"/>
</dbReference>
<dbReference type="InterPro" id="IPR033828">
    <property type="entry name" value="GATase1_CTP_Synthase"/>
</dbReference>
<dbReference type="InterPro" id="IPR027417">
    <property type="entry name" value="P-loop_NTPase"/>
</dbReference>
<dbReference type="NCBIfam" id="NF003792">
    <property type="entry name" value="PRK05380.1"/>
    <property type="match status" value="1"/>
</dbReference>
<dbReference type="NCBIfam" id="TIGR00337">
    <property type="entry name" value="PyrG"/>
    <property type="match status" value="1"/>
</dbReference>
<dbReference type="PANTHER" id="PTHR11550">
    <property type="entry name" value="CTP SYNTHASE"/>
    <property type="match status" value="1"/>
</dbReference>
<dbReference type="PANTHER" id="PTHR11550:SF0">
    <property type="entry name" value="CTP SYNTHASE-RELATED"/>
    <property type="match status" value="1"/>
</dbReference>
<dbReference type="Pfam" id="PF06418">
    <property type="entry name" value="CTP_synth_N"/>
    <property type="match status" value="1"/>
</dbReference>
<dbReference type="Pfam" id="PF00117">
    <property type="entry name" value="GATase"/>
    <property type="match status" value="1"/>
</dbReference>
<dbReference type="SUPFAM" id="SSF52317">
    <property type="entry name" value="Class I glutamine amidotransferase-like"/>
    <property type="match status" value="1"/>
</dbReference>
<dbReference type="SUPFAM" id="SSF52540">
    <property type="entry name" value="P-loop containing nucleoside triphosphate hydrolases"/>
    <property type="match status" value="1"/>
</dbReference>
<dbReference type="PROSITE" id="PS51273">
    <property type="entry name" value="GATASE_TYPE_1"/>
    <property type="match status" value="1"/>
</dbReference>
<proteinExistence type="inferred from homology"/>
<feature type="chain" id="PRO_0000266050" description="CTP synthase">
    <location>
        <begin position="1"/>
        <end position="545"/>
    </location>
</feature>
<feature type="domain" description="Glutamine amidotransferase type-1" evidence="1">
    <location>
        <begin position="290"/>
        <end position="541"/>
    </location>
</feature>
<feature type="region of interest" description="Amidoligase domain" evidence="1">
    <location>
        <begin position="1"/>
        <end position="265"/>
    </location>
</feature>
<feature type="active site" description="Nucleophile; for glutamine hydrolysis" evidence="1">
    <location>
        <position position="378"/>
    </location>
</feature>
<feature type="active site" evidence="1">
    <location>
        <position position="514"/>
    </location>
</feature>
<feature type="active site" evidence="1">
    <location>
        <position position="516"/>
    </location>
</feature>
<feature type="binding site" evidence="1">
    <location>
        <position position="13"/>
    </location>
    <ligand>
        <name>CTP</name>
        <dbReference type="ChEBI" id="CHEBI:37563"/>
        <note>allosteric inhibitor</note>
    </ligand>
</feature>
<feature type="binding site" evidence="1">
    <location>
        <position position="13"/>
    </location>
    <ligand>
        <name>UTP</name>
        <dbReference type="ChEBI" id="CHEBI:46398"/>
    </ligand>
</feature>
<feature type="binding site" evidence="1">
    <location>
        <begin position="14"/>
        <end position="19"/>
    </location>
    <ligand>
        <name>ATP</name>
        <dbReference type="ChEBI" id="CHEBI:30616"/>
    </ligand>
</feature>
<feature type="binding site" evidence="1">
    <location>
        <position position="54"/>
    </location>
    <ligand>
        <name>L-glutamine</name>
        <dbReference type="ChEBI" id="CHEBI:58359"/>
    </ligand>
</feature>
<feature type="binding site" evidence="1">
    <location>
        <position position="71"/>
    </location>
    <ligand>
        <name>ATP</name>
        <dbReference type="ChEBI" id="CHEBI:30616"/>
    </ligand>
</feature>
<feature type="binding site" evidence="1">
    <location>
        <position position="71"/>
    </location>
    <ligand>
        <name>Mg(2+)</name>
        <dbReference type="ChEBI" id="CHEBI:18420"/>
    </ligand>
</feature>
<feature type="binding site" evidence="1">
    <location>
        <position position="139"/>
    </location>
    <ligand>
        <name>Mg(2+)</name>
        <dbReference type="ChEBI" id="CHEBI:18420"/>
    </ligand>
</feature>
<feature type="binding site" evidence="1">
    <location>
        <begin position="146"/>
        <end position="148"/>
    </location>
    <ligand>
        <name>CTP</name>
        <dbReference type="ChEBI" id="CHEBI:37563"/>
        <note>allosteric inhibitor</note>
    </ligand>
</feature>
<feature type="binding site" evidence="1">
    <location>
        <begin position="186"/>
        <end position="191"/>
    </location>
    <ligand>
        <name>CTP</name>
        <dbReference type="ChEBI" id="CHEBI:37563"/>
        <note>allosteric inhibitor</note>
    </ligand>
</feature>
<feature type="binding site" evidence="1">
    <location>
        <begin position="186"/>
        <end position="191"/>
    </location>
    <ligand>
        <name>UTP</name>
        <dbReference type="ChEBI" id="CHEBI:46398"/>
    </ligand>
</feature>
<feature type="binding site" evidence="1">
    <location>
        <position position="222"/>
    </location>
    <ligand>
        <name>CTP</name>
        <dbReference type="ChEBI" id="CHEBI:37563"/>
        <note>allosteric inhibitor</note>
    </ligand>
</feature>
<feature type="binding site" evidence="1">
    <location>
        <position position="222"/>
    </location>
    <ligand>
        <name>UTP</name>
        <dbReference type="ChEBI" id="CHEBI:46398"/>
    </ligand>
</feature>
<feature type="binding site" evidence="1">
    <location>
        <position position="351"/>
    </location>
    <ligand>
        <name>L-glutamine</name>
        <dbReference type="ChEBI" id="CHEBI:58359"/>
    </ligand>
</feature>
<feature type="binding site" evidence="1">
    <location>
        <begin position="379"/>
        <end position="382"/>
    </location>
    <ligand>
        <name>L-glutamine</name>
        <dbReference type="ChEBI" id="CHEBI:58359"/>
    </ligand>
</feature>
<feature type="binding site" evidence="1">
    <location>
        <position position="402"/>
    </location>
    <ligand>
        <name>L-glutamine</name>
        <dbReference type="ChEBI" id="CHEBI:58359"/>
    </ligand>
</feature>
<feature type="binding site" evidence="1">
    <location>
        <position position="469"/>
    </location>
    <ligand>
        <name>L-glutamine</name>
        <dbReference type="ChEBI" id="CHEBI:58359"/>
    </ligand>
</feature>
<accession>Q0VQD8</accession>
<keyword id="KW-0067">ATP-binding</keyword>
<keyword id="KW-0315">Glutamine amidotransferase</keyword>
<keyword id="KW-0436">Ligase</keyword>
<keyword id="KW-0460">Magnesium</keyword>
<keyword id="KW-0479">Metal-binding</keyword>
<keyword id="KW-0547">Nucleotide-binding</keyword>
<keyword id="KW-0665">Pyrimidine biosynthesis</keyword>
<keyword id="KW-1185">Reference proteome</keyword>
<organism>
    <name type="scientific">Alcanivorax borkumensis (strain ATCC 700651 / DSM 11573 / NCIMB 13689 / SK2)</name>
    <dbReference type="NCBI Taxonomy" id="393595"/>
    <lineage>
        <taxon>Bacteria</taxon>
        <taxon>Pseudomonadati</taxon>
        <taxon>Pseudomonadota</taxon>
        <taxon>Gammaproteobacteria</taxon>
        <taxon>Oceanospirillales</taxon>
        <taxon>Alcanivoracaceae</taxon>
        <taxon>Alcanivorax</taxon>
    </lineage>
</organism>
<protein>
    <recommendedName>
        <fullName evidence="1">CTP synthase</fullName>
        <ecNumber evidence="1">6.3.4.2</ecNumber>
    </recommendedName>
    <alternativeName>
        <fullName evidence="1">Cytidine 5'-triphosphate synthase</fullName>
    </alternativeName>
    <alternativeName>
        <fullName evidence="1">Cytidine triphosphate synthetase</fullName>
        <shortName evidence="1">CTP synthetase</shortName>
        <shortName evidence="1">CTPS</shortName>
    </alternativeName>
    <alternativeName>
        <fullName evidence="1">UTP--ammonia ligase</fullName>
    </alternativeName>
</protein>